<keyword id="KW-0407">Ion channel</keyword>
<keyword id="KW-0406">Ion transport</keyword>
<keyword id="KW-0472">Membrane</keyword>
<keyword id="KW-0630">Potassium</keyword>
<keyword id="KW-0633">Potassium transport</keyword>
<keyword id="KW-1267">Proteomics identification</keyword>
<keyword id="KW-1185">Reference proteome</keyword>
<keyword id="KW-0702">S-nitrosylation</keyword>
<keyword id="KW-0812">Transmembrane</keyword>
<keyword id="KW-1133">Transmembrane helix</keyword>
<keyword id="KW-0813">Transport</keyword>
<keyword id="KW-0851">Voltage-gated channel</keyword>
<reference key="1">
    <citation type="journal article" date="2000" name="Am. J. Physiol.">
        <title>Cloning and functional expression of human retinal Kir2.4, a pH-sensitive inwardly rectifying K+ channel.</title>
        <authorList>
            <person name="Hughes B.A."/>
            <person name="Kumar G."/>
            <person name="Yuan Y."/>
            <person name="Swaminathan A."/>
            <person name="Yan D."/>
            <person name="Sharma A."/>
            <person name="Plumley L."/>
            <person name="Yang-Feng T.L."/>
            <person name="Swaroop A."/>
        </authorList>
    </citation>
    <scope>NUCLEOTIDE SEQUENCE [MRNA]</scope>
    <scope>FUNCTION</scope>
    <scope>TRANSPORTER ACTIVITY</scope>
    <scope>ACTIVITY REGULATION</scope>
    <scope>TISSUE SPECIFICITY</scope>
</reference>
<reference key="2">
    <citation type="journal article" date="2000" name="Mamm. Genome">
        <title>Cloning, structure and assignment to chromosome 19q13 of the human Kir2.4 inwardly rectifying potassium channel gene (KCNJ14).</title>
        <authorList>
            <person name="Toepert C."/>
            <person name="Doring F."/>
            <person name="Derst C."/>
            <person name="Daut J."/>
            <person name="Grzeschik K.H."/>
            <person name="Karschin A."/>
        </authorList>
    </citation>
    <scope>NUCLEOTIDE SEQUENCE [GENOMIC DNA]</scope>
</reference>
<reference key="3">
    <citation type="journal article" date="2004" name="Genome Res.">
        <title>The status, quality, and expansion of the NIH full-length cDNA project: the Mammalian Gene Collection (MGC).</title>
        <authorList>
            <consortium name="The MGC Project Team"/>
        </authorList>
    </citation>
    <scope>NUCLEOTIDE SEQUENCE [LARGE SCALE MRNA]</scope>
    <source>
        <tissue>Uterus</tissue>
    </source>
</reference>
<comment type="function">
    <text evidence="4">Inward rectifier potassium channels are characterized by a greater tendency to allow potassium to flow into the cell rather than out of it. Their voltage dependence is regulated by the concentration of extracellular potassium; as external potassium is raised, the voltage range of the channel opening shifts to more positive voltages.</text>
</comment>
<comment type="catalytic activity">
    <reaction evidence="4">
        <text>K(+)(in) = K(+)(out)</text>
        <dbReference type="Rhea" id="RHEA:29463"/>
        <dbReference type="ChEBI" id="CHEBI:29103"/>
    </reaction>
</comment>
<comment type="activity regulation">
    <text evidence="4">Channel activity is regulated by variations of cytosolic pH; channels are activated by alkaline and inhibited by acidic pH values (PubMed:10942728). Inhibited by Ba(2+) and Cs(+) in a voltage-dependent manner; sensitivity to those inhibitors is lower than in other Kir channels (PubMed:10942728).</text>
</comment>
<comment type="subcellular location">
    <subcellularLocation>
        <location>Membrane</location>
        <topology>Multi-pass membrane protein</topology>
    </subcellularLocation>
</comment>
<comment type="tissue specificity">
    <text evidence="4">Expressed preferentially in retina.</text>
</comment>
<comment type="similarity">
    <text evidence="5">Belongs to the inward rectifier-type potassium channel (TC 1.A.2.1) family. KCNJ14 subfamily.</text>
</comment>
<proteinExistence type="evidence at protein level"/>
<gene>
    <name type="primary">KCNJ14</name>
    <name type="synonym">IRK4</name>
</gene>
<accession>Q9UNX9</accession>
<feature type="chain" id="PRO_0000154968" description="ATP-sensitive inward rectifier potassium channel 14">
    <location>
        <begin position="1"/>
        <end position="436"/>
    </location>
</feature>
<feature type="topological domain" description="Cytoplasmic" evidence="1">
    <location>
        <begin position="1"/>
        <end position="83"/>
    </location>
</feature>
<feature type="transmembrane region" description="Helical; Name=M1" evidence="1">
    <location>
        <begin position="84"/>
        <end position="110"/>
    </location>
</feature>
<feature type="topological domain" description="Extracellular" evidence="1">
    <location>
        <begin position="111"/>
        <end position="133"/>
    </location>
</feature>
<feature type="intramembrane region" description="Helical; Pore-forming; Name=H5" evidence="1">
    <location>
        <begin position="134"/>
        <end position="150"/>
    </location>
</feature>
<feature type="topological domain" description="Extracellular" evidence="1">
    <location>
        <begin position="151"/>
        <end position="159"/>
    </location>
</feature>
<feature type="transmembrane region" description="Helical; Name=M2" evidence="1">
    <location>
        <begin position="160"/>
        <end position="187"/>
    </location>
</feature>
<feature type="topological domain" description="Cytoplasmic" evidence="1">
    <location>
        <begin position="188"/>
        <end position="436"/>
    </location>
</feature>
<feature type="region of interest" description="Disordered" evidence="3">
    <location>
        <begin position="14"/>
        <end position="43"/>
    </location>
</feature>
<feature type="region of interest" description="Disordered" evidence="3">
    <location>
        <begin position="400"/>
        <end position="436"/>
    </location>
</feature>
<feature type="short sequence motif" description="Selectivity filter" evidence="1">
    <location>
        <begin position="147"/>
        <end position="152"/>
    </location>
</feature>
<feature type="compositionally biased region" description="Acidic residues" evidence="3">
    <location>
        <begin position="400"/>
        <end position="418"/>
    </location>
</feature>
<feature type="compositionally biased region" description="Low complexity" evidence="3">
    <location>
        <begin position="426"/>
        <end position="436"/>
    </location>
</feature>
<feature type="modified residue" description="S-nitrosocysteine" evidence="2">
    <location>
        <position position="81"/>
    </location>
</feature>
<feature type="sequence variant" id="VAR_034019" description="In dbSNP:rs3745725.">
    <original>R</original>
    <variation>C</variation>
    <location>
        <position position="289"/>
    </location>
</feature>
<dbReference type="EMBL" id="AF081466">
    <property type="protein sequence ID" value="AAD51376.1"/>
    <property type="molecule type" value="mRNA"/>
</dbReference>
<dbReference type="EMBL" id="AF181988">
    <property type="protein sequence ID" value="AAF97619.1"/>
    <property type="molecule type" value="Genomic_DNA"/>
</dbReference>
<dbReference type="EMBL" id="BC035918">
    <property type="protein sequence ID" value="AAH35918.1"/>
    <property type="molecule type" value="mRNA"/>
</dbReference>
<dbReference type="CCDS" id="CCDS12721.1"/>
<dbReference type="RefSeq" id="NP_037480.1">
    <property type="nucleotide sequence ID" value="NM_013348.4"/>
</dbReference>
<dbReference type="SMR" id="Q9UNX9"/>
<dbReference type="FunCoup" id="Q9UNX9">
    <property type="interactions" value="223"/>
</dbReference>
<dbReference type="STRING" id="9606.ENSP00000375756"/>
<dbReference type="DrugBank" id="DB11148">
    <property type="generic name" value="Butamben"/>
</dbReference>
<dbReference type="DrugBank" id="DB04855">
    <property type="generic name" value="Dronedarone"/>
</dbReference>
<dbReference type="DrugBank" id="DB01110">
    <property type="generic name" value="Miconazole"/>
</dbReference>
<dbReference type="DrugBank" id="DB00243">
    <property type="generic name" value="Ranolazine"/>
</dbReference>
<dbReference type="DrugBank" id="DB00867">
    <property type="generic name" value="Ritodrine"/>
</dbReference>
<dbReference type="DrugBank" id="DB01392">
    <property type="generic name" value="Yohimbine"/>
</dbReference>
<dbReference type="GuidetoPHARMACOLOGY" id="433"/>
<dbReference type="BioMuta" id="KCNJ14"/>
<dbReference type="DMDM" id="54036159"/>
<dbReference type="MassIVE" id="Q9UNX9"/>
<dbReference type="PaxDb" id="9606-ENSP00000375756"/>
<dbReference type="PeptideAtlas" id="Q9UNX9"/>
<dbReference type="ProteomicsDB" id="85341"/>
<dbReference type="TopDownProteomics" id="Q9UNX9"/>
<dbReference type="Antibodypedia" id="68399">
    <property type="antibodies" value="20 antibodies from 13 providers"/>
</dbReference>
<dbReference type="DNASU" id="3770"/>
<dbReference type="Ensembl" id="ENST00000342291.3">
    <property type="protein sequence ID" value="ENSP00000341479.1"/>
    <property type="gene ID" value="ENSG00000182324.7"/>
</dbReference>
<dbReference type="Ensembl" id="ENST00000391884.2">
    <property type="protein sequence ID" value="ENSP00000375756.1"/>
    <property type="gene ID" value="ENSG00000182324.7"/>
</dbReference>
<dbReference type="GeneID" id="3770"/>
<dbReference type="KEGG" id="hsa:3770"/>
<dbReference type="MANE-Select" id="ENST00000342291.3">
    <property type="protein sequence ID" value="ENSP00000341479.1"/>
    <property type="RefSeq nucleotide sequence ID" value="NM_013348.4"/>
    <property type="RefSeq protein sequence ID" value="NP_037480.1"/>
</dbReference>
<dbReference type="UCSC" id="uc002pje.3">
    <property type="organism name" value="human"/>
</dbReference>
<dbReference type="AGR" id="HGNC:6260"/>
<dbReference type="CTD" id="3770"/>
<dbReference type="DisGeNET" id="3770"/>
<dbReference type="GeneCards" id="KCNJ14"/>
<dbReference type="HGNC" id="HGNC:6260">
    <property type="gene designation" value="KCNJ14"/>
</dbReference>
<dbReference type="HPA" id="ENSG00000182324">
    <property type="expression patterns" value="Tissue enriched (retina)"/>
</dbReference>
<dbReference type="MIM" id="603953">
    <property type="type" value="gene"/>
</dbReference>
<dbReference type="neXtProt" id="NX_Q9UNX9"/>
<dbReference type="OpenTargets" id="ENSG00000182324"/>
<dbReference type="PharmGKB" id="PA30045"/>
<dbReference type="VEuPathDB" id="HostDB:ENSG00000182324"/>
<dbReference type="eggNOG" id="KOG3827">
    <property type="taxonomic scope" value="Eukaryota"/>
</dbReference>
<dbReference type="GeneTree" id="ENSGT01030000234586"/>
<dbReference type="HOGENOM" id="CLU_022738_3_0_1"/>
<dbReference type="InParanoid" id="Q9UNX9"/>
<dbReference type="OMA" id="CHNGWAP"/>
<dbReference type="OrthoDB" id="273257at2759"/>
<dbReference type="PAN-GO" id="Q9UNX9">
    <property type="GO annotations" value="4 GO annotations based on evolutionary models"/>
</dbReference>
<dbReference type="PhylomeDB" id="Q9UNX9"/>
<dbReference type="TreeFam" id="TF313676"/>
<dbReference type="PathwayCommons" id="Q9UNX9"/>
<dbReference type="Reactome" id="R-HSA-1296053">
    <property type="pathway name" value="Classical Kir channels"/>
</dbReference>
<dbReference type="Reactome" id="R-HSA-5576886">
    <property type="pathway name" value="Phase 4 - resting membrane potential"/>
</dbReference>
<dbReference type="SignaLink" id="Q9UNX9"/>
<dbReference type="BioGRID-ORCS" id="3770">
    <property type="hits" value="22 hits in 1145 CRISPR screens"/>
</dbReference>
<dbReference type="GeneWiki" id="KCNJ14"/>
<dbReference type="GenomeRNAi" id="3770"/>
<dbReference type="Pharos" id="Q9UNX9">
    <property type="development level" value="Tchem"/>
</dbReference>
<dbReference type="PRO" id="PR:Q9UNX9"/>
<dbReference type="Proteomes" id="UP000005640">
    <property type="component" value="Chromosome 19"/>
</dbReference>
<dbReference type="RNAct" id="Q9UNX9">
    <property type="molecule type" value="protein"/>
</dbReference>
<dbReference type="Bgee" id="ENSG00000182324">
    <property type="expression patterns" value="Expressed in lower esophagus mucosa and 91 other cell types or tissues"/>
</dbReference>
<dbReference type="GO" id="GO:0005886">
    <property type="term" value="C:plasma membrane"/>
    <property type="evidence" value="ECO:0000318"/>
    <property type="project" value="GO_Central"/>
</dbReference>
<dbReference type="GO" id="GO:0008076">
    <property type="term" value="C:voltage-gated potassium channel complex"/>
    <property type="evidence" value="ECO:0000304"/>
    <property type="project" value="ProtInc"/>
</dbReference>
<dbReference type="GO" id="GO:0005242">
    <property type="term" value="F:inward rectifier potassium channel activity"/>
    <property type="evidence" value="ECO:0000318"/>
    <property type="project" value="GO_Central"/>
</dbReference>
<dbReference type="GO" id="GO:1990573">
    <property type="term" value="P:potassium ion import across plasma membrane"/>
    <property type="evidence" value="ECO:0000318"/>
    <property type="project" value="GO_Central"/>
</dbReference>
<dbReference type="GO" id="GO:0034765">
    <property type="term" value="P:regulation of monoatomic ion transmembrane transport"/>
    <property type="evidence" value="ECO:0000318"/>
    <property type="project" value="GO_Central"/>
</dbReference>
<dbReference type="FunFam" id="1.10.287.70:FF:000063">
    <property type="entry name" value="ATP-sensitive inward rectifier potassium channel 14"/>
    <property type="match status" value="1"/>
</dbReference>
<dbReference type="FunFam" id="2.60.40.1400:FF:000001">
    <property type="entry name" value="G protein-activated inward rectifier potassium channel 2"/>
    <property type="match status" value="1"/>
</dbReference>
<dbReference type="Gene3D" id="1.10.287.70">
    <property type="match status" value="1"/>
</dbReference>
<dbReference type="Gene3D" id="2.60.40.1400">
    <property type="entry name" value="G protein-activated inward rectifier potassium channel 1"/>
    <property type="match status" value="1"/>
</dbReference>
<dbReference type="InterPro" id="IPR014756">
    <property type="entry name" value="Ig_E-set"/>
</dbReference>
<dbReference type="InterPro" id="IPR041647">
    <property type="entry name" value="IRK_C"/>
</dbReference>
<dbReference type="InterPro" id="IPR016449">
    <property type="entry name" value="K_chnl_inward-rec_Kir"/>
</dbReference>
<dbReference type="InterPro" id="IPR013518">
    <property type="entry name" value="K_chnl_inward-rec_Kir_cyto"/>
</dbReference>
<dbReference type="InterPro" id="IPR040445">
    <property type="entry name" value="Kir_TM"/>
</dbReference>
<dbReference type="PANTHER" id="PTHR11767:SF40">
    <property type="entry name" value="ATP-SENSITIVE INWARD RECTIFIER POTASSIUM CHANNEL 14"/>
    <property type="match status" value="1"/>
</dbReference>
<dbReference type="PANTHER" id="PTHR11767">
    <property type="entry name" value="INWARD RECTIFIER POTASSIUM CHANNEL"/>
    <property type="match status" value="1"/>
</dbReference>
<dbReference type="Pfam" id="PF01007">
    <property type="entry name" value="IRK"/>
    <property type="match status" value="1"/>
</dbReference>
<dbReference type="Pfam" id="PF17655">
    <property type="entry name" value="IRK_C"/>
    <property type="match status" value="1"/>
</dbReference>
<dbReference type="PIRSF" id="PIRSF005465">
    <property type="entry name" value="GIRK_kir"/>
    <property type="match status" value="1"/>
</dbReference>
<dbReference type="PRINTS" id="PR01320">
    <property type="entry name" value="KIRCHANNEL"/>
</dbReference>
<dbReference type="SUPFAM" id="SSF81296">
    <property type="entry name" value="E set domains"/>
    <property type="match status" value="1"/>
</dbReference>
<dbReference type="SUPFAM" id="SSF81324">
    <property type="entry name" value="Voltage-gated potassium channels"/>
    <property type="match status" value="1"/>
</dbReference>
<sequence>MGLARALRRLSGALDSGDSRAGDEEEAGPGLCRNGWAPAPVQSPVGRRRGRFVKKDGHCNVRFVNLGGQGARYLSDLFTTCVDVRWRWMCLLFSCSFLASWLLFGLAFWLIASLHGDLAAPPPPAPCFSHVASFLAAFLFALETQTSIGYGVRSVTEECPAAVAAVVLQCIAGCVLDAFVVGAVMAKMAKPKKRNETLVFSENAVVALRDHRLCLMWRVGNLRRSHLVEAHVRAQLLQPRVTPEGEYIPLDHQDVDVGFDGGTDRIFLVSPITIVHEIDSASPLYELGRAELARADFELVVILEGMVEATAMTTQCRSSYLPGELLWGHRFEPVLFQRGSQYEVDYRHFHRTYEVPGTPVCSAKELDERAEQASHSLKSSFPGSLTAFCYENELALSCCQEEDEDDETEEGNGVETEDGAASPRVLTPTLALTLPP</sequence>
<protein>
    <recommendedName>
        <fullName>ATP-sensitive inward rectifier potassium channel 14</fullName>
    </recommendedName>
    <alternativeName>
        <fullName>Inward rectifier K(+) channel Kir2.4</fullName>
        <shortName>IRK-4</shortName>
    </alternativeName>
    <alternativeName>
        <fullName>Potassium channel, inwardly rectifying subfamily J member 14</fullName>
    </alternativeName>
</protein>
<name>KCJ14_HUMAN</name>
<evidence type="ECO:0000250" key="1">
    <source>
        <dbReference type="UniProtKB" id="F1NHE9"/>
    </source>
</evidence>
<evidence type="ECO:0000250" key="2">
    <source>
        <dbReference type="UniProtKB" id="P63252"/>
    </source>
</evidence>
<evidence type="ECO:0000256" key="3">
    <source>
        <dbReference type="SAM" id="MobiDB-lite"/>
    </source>
</evidence>
<evidence type="ECO:0000269" key="4">
    <source>
    </source>
</evidence>
<evidence type="ECO:0000305" key="5"/>
<organism>
    <name type="scientific">Homo sapiens</name>
    <name type="common">Human</name>
    <dbReference type="NCBI Taxonomy" id="9606"/>
    <lineage>
        <taxon>Eukaryota</taxon>
        <taxon>Metazoa</taxon>
        <taxon>Chordata</taxon>
        <taxon>Craniata</taxon>
        <taxon>Vertebrata</taxon>
        <taxon>Euteleostomi</taxon>
        <taxon>Mammalia</taxon>
        <taxon>Eutheria</taxon>
        <taxon>Euarchontoglires</taxon>
        <taxon>Primates</taxon>
        <taxon>Haplorrhini</taxon>
        <taxon>Catarrhini</taxon>
        <taxon>Hominidae</taxon>
        <taxon>Homo</taxon>
    </lineage>
</organism>